<proteinExistence type="evidence at transcript level"/>
<organism>
    <name type="scientific">Pan troglodytes</name>
    <name type="common">Chimpanzee</name>
    <dbReference type="NCBI Taxonomy" id="9598"/>
    <lineage>
        <taxon>Eukaryota</taxon>
        <taxon>Metazoa</taxon>
        <taxon>Chordata</taxon>
        <taxon>Craniata</taxon>
        <taxon>Vertebrata</taxon>
        <taxon>Euteleostomi</taxon>
        <taxon>Mammalia</taxon>
        <taxon>Eutheria</taxon>
        <taxon>Euarchontoglires</taxon>
        <taxon>Primates</taxon>
        <taxon>Haplorrhini</taxon>
        <taxon>Catarrhini</taxon>
        <taxon>Hominidae</taxon>
        <taxon>Pan</taxon>
    </lineage>
</organism>
<feature type="chain" id="PRO_0000046669" description="NKG2-D type II integral membrane protein">
    <location>
        <begin position="1"/>
        <end position="216"/>
    </location>
</feature>
<feature type="topological domain" description="Cytoplasmic" evidence="3">
    <location>
        <begin position="1"/>
        <end position="51"/>
    </location>
</feature>
<feature type="transmembrane region" description="Helical; Signal-anchor for type II membrane protein" evidence="3">
    <location>
        <begin position="52"/>
        <end position="72"/>
    </location>
</feature>
<feature type="topological domain" description="Extracellular" evidence="3">
    <location>
        <begin position="73"/>
        <end position="216"/>
    </location>
</feature>
<feature type="domain" description="C-type lectin" evidence="4">
    <location>
        <begin position="98"/>
        <end position="213"/>
    </location>
</feature>
<feature type="glycosylation site" description="N-linked (GlcNAc...) asparagine" evidence="3">
    <location>
        <position position="115"/>
    </location>
</feature>
<feature type="glycosylation site" description="N-linked (GlcNAc...) asparagine" evidence="3">
    <location>
        <position position="131"/>
    </location>
</feature>
<feature type="glycosylation site" description="N-linked (GlcNAc...) asparagine" evidence="3">
    <location>
        <position position="163"/>
    </location>
</feature>
<feature type="glycosylation site" description="N-linked (GlcNAc...) asparagine" evidence="3">
    <location>
        <position position="202"/>
    </location>
</feature>
<feature type="disulfide bond" evidence="4">
    <location>
        <begin position="96"/>
        <end position="105"/>
    </location>
</feature>
<feature type="disulfide bond" evidence="4">
    <location>
        <begin position="99"/>
        <end position="110"/>
    </location>
</feature>
<feature type="disulfide bond" evidence="4">
    <location>
        <begin position="127"/>
        <end position="211"/>
    </location>
</feature>
<feature type="disulfide bond" evidence="4">
    <location>
        <begin position="189"/>
        <end position="203"/>
    </location>
</feature>
<evidence type="ECO:0000250" key="1"/>
<evidence type="ECO:0000250" key="2">
    <source>
        <dbReference type="UniProtKB" id="P26718"/>
    </source>
</evidence>
<evidence type="ECO:0000255" key="3"/>
<evidence type="ECO:0000255" key="4">
    <source>
        <dbReference type="PROSITE-ProRule" id="PRU00040"/>
    </source>
</evidence>
<dbReference type="EMBL" id="AF259063">
    <property type="protein sequence ID" value="AAF86971.1"/>
    <property type="molecule type" value="mRNA"/>
</dbReference>
<dbReference type="EMBL" id="AM113545">
    <property type="protein sequence ID" value="CAJ34533.1"/>
    <property type="molecule type" value="mRNA"/>
</dbReference>
<dbReference type="RefSeq" id="NP_001009059.1">
    <property type="nucleotide sequence ID" value="NM_001009059.1"/>
</dbReference>
<dbReference type="RefSeq" id="XP_009423046.1">
    <property type="nucleotide sequence ID" value="XM_009424771.2"/>
</dbReference>
<dbReference type="RefSeq" id="XP_009423047.1">
    <property type="nucleotide sequence ID" value="XM_009424772.2"/>
</dbReference>
<dbReference type="RefSeq" id="XP_009423048.1">
    <property type="nucleotide sequence ID" value="XM_009424773.2"/>
</dbReference>
<dbReference type="SMR" id="Q9MZ37"/>
<dbReference type="FunCoup" id="Q9MZ37">
    <property type="interactions" value="216"/>
</dbReference>
<dbReference type="STRING" id="9598.ENSPTRP00000007992"/>
<dbReference type="GlyCosmos" id="Q9MZ37">
    <property type="glycosylation" value="4 sites, No reported glycans"/>
</dbReference>
<dbReference type="PaxDb" id="9598-ENSPTRP00000007992"/>
<dbReference type="Ensembl" id="ENSPTRT00000008649.7">
    <property type="protein sequence ID" value="ENSPTRP00000007992.6"/>
    <property type="gene ID" value="ENSPTRG00000004672.7"/>
</dbReference>
<dbReference type="GeneID" id="450153"/>
<dbReference type="KEGG" id="ptr:450153"/>
<dbReference type="CTD" id="22914"/>
<dbReference type="VGNC" id="VGNC:52050">
    <property type="gene designation" value="KLRK1"/>
</dbReference>
<dbReference type="eggNOG" id="KOG4297">
    <property type="taxonomic scope" value="Eukaryota"/>
</dbReference>
<dbReference type="GeneTree" id="ENSGT00940000154558"/>
<dbReference type="HOGENOM" id="CLU_049894_9_1_1"/>
<dbReference type="InParanoid" id="Q9MZ37"/>
<dbReference type="OMA" id="DRWAHHS"/>
<dbReference type="TreeFam" id="TF336674"/>
<dbReference type="Proteomes" id="UP000002277">
    <property type="component" value="Chromosome 12"/>
</dbReference>
<dbReference type="Bgee" id="ENSPTRG00000004672">
    <property type="expression patterns" value="Expressed in lymph node and 19 other cell types or tissues"/>
</dbReference>
<dbReference type="GO" id="GO:0009986">
    <property type="term" value="C:cell surface"/>
    <property type="evidence" value="ECO:0000250"/>
    <property type="project" value="UniProtKB"/>
</dbReference>
<dbReference type="GO" id="GO:0009897">
    <property type="term" value="C:external side of plasma membrane"/>
    <property type="evidence" value="ECO:0000318"/>
    <property type="project" value="GO_Central"/>
</dbReference>
<dbReference type="GO" id="GO:0030246">
    <property type="term" value="F:carbohydrate binding"/>
    <property type="evidence" value="ECO:0007669"/>
    <property type="project" value="UniProtKB-KW"/>
</dbReference>
<dbReference type="GO" id="GO:0042802">
    <property type="term" value="F:identical protein binding"/>
    <property type="evidence" value="ECO:0007669"/>
    <property type="project" value="Ensembl"/>
</dbReference>
<dbReference type="GO" id="GO:0042288">
    <property type="term" value="F:MHC class I protein binding"/>
    <property type="evidence" value="ECO:0007669"/>
    <property type="project" value="Ensembl"/>
</dbReference>
<dbReference type="GO" id="GO:0032394">
    <property type="term" value="F:MHC class Ib receptor activity"/>
    <property type="evidence" value="ECO:0007669"/>
    <property type="project" value="Ensembl"/>
</dbReference>
<dbReference type="GO" id="GO:0038023">
    <property type="term" value="F:signaling receptor activity"/>
    <property type="evidence" value="ECO:0000318"/>
    <property type="project" value="GO_Central"/>
</dbReference>
<dbReference type="GO" id="GO:0002250">
    <property type="term" value="P:adaptive immune response"/>
    <property type="evidence" value="ECO:0007669"/>
    <property type="project" value="UniProtKB-KW"/>
</dbReference>
<dbReference type="GO" id="GO:0030154">
    <property type="term" value="P:cell differentiation"/>
    <property type="evidence" value="ECO:0007669"/>
    <property type="project" value="UniProtKB-KW"/>
</dbReference>
<dbReference type="GO" id="GO:0071222">
    <property type="term" value="P:cellular response to lipopolysaccharide"/>
    <property type="evidence" value="ECO:0007669"/>
    <property type="project" value="Ensembl"/>
</dbReference>
<dbReference type="GO" id="GO:0050830">
    <property type="term" value="P:defense response to Gram-positive bacterium"/>
    <property type="evidence" value="ECO:0007669"/>
    <property type="project" value="Ensembl"/>
</dbReference>
<dbReference type="GO" id="GO:0030101">
    <property type="term" value="P:natural killer cell activation"/>
    <property type="evidence" value="ECO:0007669"/>
    <property type="project" value="Ensembl"/>
</dbReference>
<dbReference type="GO" id="GO:0042267">
    <property type="term" value="P:natural killer cell mediated cytotoxicity"/>
    <property type="evidence" value="ECO:0007669"/>
    <property type="project" value="Ensembl"/>
</dbReference>
<dbReference type="GO" id="GO:2000502">
    <property type="term" value="P:negative regulation of natural killer cell chemotaxis"/>
    <property type="evidence" value="ECO:0007669"/>
    <property type="project" value="Ensembl"/>
</dbReference>
<dbReference type="GO" id="GO:0006809">
    <property type="term" value="P:nitric oxide biosynthetic process"/>
    <property type="evidence" value="ECO:0007669"/>
    <property type="project" value="Ensembl"/>
</dbReference>
<dbReference type="GO" id="GO:0045954">
    <property type="term" value="P:positive regulation of natural killer cell mediated cytotoxicity"/>
    <property type="evidence" value="ECO:0000250"/>
    <property type="project" value="UniProtKB"/>
</dbReference>
<dbReference type="GO" id="GO:0045429">
    <property type="term" value="P:positive regulation of nitric oxide biosynthetic process"/>
    <property type="evidence" value="ECO:0007669"/>
    <property type="project" value="Ensembl"/>
</dbReference>
<dbReference type="GO" id="GO:0032729">
    <property type="term" value="P:positive regulation of type II interferon production"/>
    <property type="evidence" value="ECO:0007669"/>
    <property type="project" value="Ensembl"/>
</dbReference>
<dbReference type="GO" id="GO:0002223">
    <property type="term" value="P:stimulatory C-type lectin receptor signaling pathway"/>
    <property type="evidence" value="ECO:0007669"/>
    <property type="project" value="Ensembl"/>
</dbReference>
<dbReference type="CDD" id="cd03593">
    <property type="entry name" value="CLECT_NK_receptors_like"/>
    <property type="match status" value="1"/>
</dbReference>
<dbReference type="FunFam" id="3.10.100.10:FF:000055">
    <property type="entry name" value="NKG2-D type II integral membrane protein"/>
    <property type="match status" value="1"/>
</dbReference>
<dbReference type="Gene3D" id="3.10.100.10">
    <property type="entry name" value="Mannose-Binding Protein A, subunit A"/>
    <property type="match status" value="1"/>
</dbReference>
<dbReference type="InterPro" id="IPR001304">
    <property type="entry name" value="C-type_lectin-like"/>
</dbReference>
<dbReference type="InterPro" id="IPR016186">
    <property type="entry name" value="C-type_lectin-like/link_sf"/>
</dbReference>
<dbReference type="InterPro" id="IPR016187">
    <property type="entry name" value="CTDL_fold"/>
</dbReference>
<dbReference type="InterPro" id="IPR042169">
    <property type="entry name" value="NKG2D"/>
</dbReference>
<dbReference type="InterPro" id="IPR033992">
    <property type="entry name" value="NKR-like_CTLD"/>
</dbReference>
<dbReference type="PANTHER" id="PTHR47494">
    <property type="entry name" value="NKG2-D TYPE II INTEGRAL MEMBRANE PROTEIN"/>
    <property type="match status" value="1"/>
</dbReference>
<dbReference type="PANTHER" id="PTHR47494:SF1">
    <property type="entry name" value="NKG2-D TYPE II INTEGRAL MEMBRANE PROTEIN"/>
    <property type="match status" value="1"/>
</dbReference>
<dbReference type="Pfam" id="PF00059">
    <property type="entry name" value="Lectin_C"/>
    <property type="match status" value="1"/>
</dbReference>
<dbReference type="SMART" id="SM00034">
    <property type="entry name" value="CLECT"/>
    <property type="match status" value="1"/>
</dbReference>
<dbReference type="SUPFAM" id="SSF56436">
    <property type="entry name" value="C-type lectin-like"/>
    <property type="match status" value="1"/>
</dbReference>
<dbReference type="PROSITE" id="PS50041">
    <property type="entry name" value="C_TYPE_LECTIN_2"/>
    <property type="match status" value="1"/>
</dbReference>
<accession>Q9MZ37</accession>
<accession>Q05HF9</accession>
<keyword id="KW-1064">Adaptive immunity</keyword>
<keyword id="KW-1003">Cell membrane</keyword>
<keyword id="KW-0221">Differentiation</keyword>
<keyword id="KW-1015">Disulfide bond</keyword>
<keyword id="KW-0325">Glycoprotein</keyword>
<keyword id="KW-0391">Immunity</keyword>
<keyword id="KW-0399">Innate immunity</keyword>
<keyword id="KW-0430">Lectin</keyword>
<keyword id="KW-0472">Membrane</keyword>
<keyword id="KW-0675">Receptor</keyword>
<keyword id="KW-1185">Reference proteome</keyword>
<keyword id="KW-0735">Signal-anchor</keyword>
<keyword id="KW-0812">Transmembrane</keyword>
<keyword id="KW-1133">Transmembrane helix</keyword>
<protein>
    <recommendedName>
        <fullName>NKG2-D type II integral membrane protein</fullName>
    </recommendedName>
    <alternativeName>
        <fullName>Killer cell lectin-like receptor subfamily K member 1</fullName>
    </alternativeName>
    <alternativeName>
        <fullName>NK cell receptor D</fullName>
    </alternativeName>
    <alternativeName>
        <fullName>NKG2-D-activating NK receptor</fullName>
    </alternativeName>
    <cdAntigenName>CD314</cdAntigenName>
</protein>
<comment type="function">
    <text evidence="1">Functions as an activating and costimulatory receptor involved in immunosurveillance upon binding to various cellular stress-inducible ligands displayed at the surface of autologous tumor cells and virus-infected cells. Provides both stimulatory and costimulatory innate immune responses on activated killer (NK) cells, leading to cytotoxic activity. Acts as a costimulatory receptor for T-cell receptor (TCR) in CD8(+) T-cell-mediated adaptive immune responses by amplifying T-cell activation. Stimulates perforin-mediated elimination of ligand-expressing tumor cells. Signaling involves calcium influx, culminating in the expression of TNF-alpha. Participates in NK cell-mediated bone marrow graft rejection. May play a regulatory role in differentiation and survival of NK cells. Binds to ligands belonging to various subfamilies of MHC class I-related glycoproteins (By similarity).</text>
</comment>
<comment type="subunit">
    <text evidence="1 2">Homodimer; disulfide-linked. Heterohexamer composed of two subunits of KLRK1 and four subunits of HCST/DAP10. Interacts (via transmembrane domain) with HCST/DAP10 (via transmembrane domain); the interaction is required for KLRK1 NK cell surface and induces NK cell-mediated cytotoxicity. Can form disulfide-bonded heterodimer with CD94 (By similarity). Interacts with CEACAM1; recruits PTPN6 that dephosphorylates VAV1 (By similarity).</text>
</comment>
<comment type="subcellular location">
    <subcellularLocation>
        <location evidence="1">Cell membrane</location>
        <topology evidence="1">Single-pass type II membrane protein</topology>
    </subcellularLocation>
    <text evidence="1">Colocalized with HCST on the cell surface.</text>
</comment>
<comment type="tissue specificity">
    <text>Natural killer cells.</text>
</comment>
<comment type="miscellaneous">
    <text evidence="1">Is not capable of signal transduction by itself, but operates through the adapter protein HCST.</text>
</comment>
<reference key="1">
    <citation type="journal article" date="2002" name="J. Immunol.">
        <title>Conservation and variation in human and common chimpanzee CD94 and NKG2 genes.</title>
        <authorList>
            <person name="Shum B.P."/>
            <person name="Flodin L.R."/>
            <person name="Muir D.G."/>
            <person name="Rajalingam R."/>
            <person name="Khakoo S.I."/>
            <person name="Cleland S."/>
            <person name="Guethlein L.A."/>
            <person name="Uhrberg M."/>
            <person name="Parham P."/>
        </authorList>
    </citation>
    <scope>NUCLEOTIDE SEQUENCE [MRNA]</scope>
</reference>
<reference key="2">
    <citation type="submission" date="2005-10" db="EMBL/GenBank/DDBJ databases">
        <title>Conserved NK receptors in primates.</title>
        <authorList>
            <person name="Biassoni R."/>
            <person name="Radic L."/>
            <person name="Faravelli A."/>
            <person name="De Maria A."/>
        </authorList>
    </citation>
    <scope>NUCLEOTIDE SEQUENCE [MRNA]</scope>
    <source>
        <tissue>Lymphoid tissue</tissue>
    </source>
</reference>
<sequence>MGWIRGRRSRHSWEMSEFHNYNLDLKKSDFSTRWQKQRCPVVKSKCRENASPFFFCCFIAVAMGIRFIIMVTIWSAVFLNSLFNQEVQIPLTESYCGPCPKNWICYKNNCYQFFNESKNWYESQASCMSQNASLLKVYSKEDQDLLKLVKSYHWMGLVHIPTNGSWQWEDGSILSPNLLTIIEMQKGDCALYASSFKGYIENCSTPNTYICMQRTV</sequence>
<gene>
    <name type="primary">KLRK1</name>
    <name type="synonym">NKG2D</name>
</gene>
<name>NKG2D_PANTR</name>